<organism>
    <name type="scientific">Acinetobacter baumannii</name>
    <dbReference type="NCBI Taxonomy" id="470"/>
    <lineage>
        <taxon>Bacteria</taxon>
        <taxon>Pseudomonadati</taxon>
        <taxon>Pseudomonadota</taxon>
        <taxon>Gammaproteobacteria</taxon>
        <taxon>Moraxellales</taxon>
        <taxon>Moraxellaceae</taxon>
        <taxon>Acinetobacter</taxon>
        <taxon>Acinetobacter calcoaceticus/baumannii complex</taxon>
    </lineage>
</organism>
<evidence type="ECO:0000269" key="1">
    <source>
    </source>
</evidence>
<evidence type="ECO:0000303" key="2">
    <source>
    </source>
</evidence>
<evidence type="ECO:0000305" key="3"/>
<feature type="chain" id="PRO_0000058040" description="29 kDa outer membrane protein">
    <location>
        <begin position="1"/>
        <end position="24" status="greater than"/>
    </location>
</feature>
<feature type="non-terminal residue" evidence="2">
    <location>
        <position position="24"/>
    </location>
</feature>
<proteinExistence type="evidence at protein level"/>
<reference evidence="3" key="1">
    <citation type="journal article" date="2002" name="J. Clin. Microbiol.">
        <title>Loss of a 29-kilodalton outer membrane protein in Acinetobacter baumannii is associated with imipenem resistance.</title>
        <authorList>
            <person name="Limansky A.S."/>
            <person name="Mussi A.S."/>
            <person name="Viale A.M."/>
        </authorList>
    </citation>
    <scope>PROTEIN SEQUENCE</scope>
    <scope>SUBCELLULAR LOCATION</scope>
    <source>
        <strain>Ab288</strain>
    </source>
</reference>
<comment type="function">
    <text evidence="2">May be involved in transporting molecules across the outer membrane.</text>
</comment>
<comment type="subcellular location">
    <subcellularLocation>
        <location evidence="1">Cell outer membrane</location>
    </subcellularLocation>
</comment>
<comment type="miscellaneous">
    <text>Its absence leads to imipenem resistance.</text>
</comment>
<dbReference type="STRING" id="400667.A1S_2538"/>
<dbReference type="eggNOG" id="COG4625">
    <property type="taxonomic scope" value="Bacteria"/>
</dbReference>
<dbReference type="GO" id="GO:0009279">
    <property type="term" value="C:cell outer membrane"/>
    <property type="evidence" value="ECO:0007669"/>
    <property type="project" value="UniProtKB-SubCell"/>
</dbReference>
<sequence>DEAVVHDSYAFDKNQLIPVGARAE</sequence>
<accession>P83446</accession>
<name>OM29_ACIBA</name>
<keyword id="KW-0998">Cell outer membrane</keyword>
<keyword id="KW-0903">Direct protein sequencing</keyword>
<keyword id="KW-0472">Membrane</keyword>
<protein>
    <recommendedName>
        <fullName>29 kDa outer membrane protein</fullName>
        <shortName>29 kDa OMP</shortName>
    </recommendedName>
</protein>